<comment type="function">
    <text evidence="1 2">Component of the SOSS complex, a multiprotein complex that functions downstream of the MRN complex to promote DNA repair and G2/M checkpoint. The SOSS complex associates with single-stranded DNA at DNA lesions and influences diverse endpoints in the cellular DNA damage response including cell-cycle checkpoint activation, recombinational repair and maintenance of genomic stability. Required for efficient homologous recombination-dependent repair of double-strand breaks (DSBs) and ATM-dependent signaling pathways.</text>
</comment>
<comment type="subunit">
    <text evidence="1 2">Component of the SOSS complex, composed of SOSS-B (SOSS-B1/NABP2 or SOSS-B2/NABP1), SOSS-A/INTS3 and SOSS-C/INIP. SOSS complexes containing SOSS-B1/NABP2 are more abundant than complexes containing SOSS-B2/NABP1. Interacts with INTS3; the interaction is direct.</text>
</comment>
<comment type="interaction">
    <interactant intactId="EBI-2881520">
        <id>Q9NRY2</id>
    </interactant>
    <interactant intactId="EBI-948603">
        <id>Q03989</id>
        <label>ARID5A</label>
    </interactant>
    <organismsDiffer>false</organismsDiffer>
    <experiments>3</experiments>
</comment>
<comment type="interaction">
    <interactant intactId="EBI-2881520">
        <id>Q9NRY2</id>
    </interactant>
    <interactant intactId="EBI-953896">
        <id>Q9NP55</id>
        <label>BPIFA1</label>
    </interactant>
    <organismsDiffer>false</organismsDiffer>
    <experiments>3</experiments>
</comment>
<comment type="interaction">
    <interactant intactId="EBI-2881520">
        <id>Q9NRY2</id>
    </interactant>
    <interactant intactId="EBI-12206931">
        <id>Q14129</id>
        <label>DGCR6</label>
    </interactant>
    <organismsDiffer>false</organismsDiffer>
    <experiments>5</experiments>
</comment>
<comment type="interaction">
    <interactant intactId="EBI-2881520">
        <id>Q9NRY2</id>
    </interactant>
    <interactant intactId="EBI-742953">
        <id>Q9BY27</id>
        <label>DGCR6L</label>
    </interactant>
    <organismsDiffer>false</organismsDiffer>
    <experiments>6</experiments>
</comment>
<comment type="interaction">
    <interactant intactId="EBI-2881520">
        <id>Q9NRY2</id>
    </interactant>
    <interactant intactId="EBI-2680854">
        <id>Q68E01</id>
        <label>INTS3</label>
    </interactant>
    <organismsDiffer>false</organismsDiffer>
    <experiments>6</experiments>
</comment>
<comment type="interaction">
    <interactant intactId="EBI-2881520">
        <id>Q9NRY2</id>
    </interactant>
    <interactant intactId="EBI-1047093">
        <id>O76011</id>
        <label>KRT34</label>
    </interactant>
    <organismsDiffer>false</organismsDiffer>
    <experiments>3</experiments>
</comment>
<comment type="interaction">
    <interactant intactId="EBI-2881520">
        <id>Q9NRY2</id>
    </interactant>
    <interactant intactId="EBI-740322">
        <id>Q93062</id>
        <label>RBPMS</label>
    </interactant>
    <organismsDiffer>false</organismsDiffer>
    <experiments>4</experiments>
</comment>
<comment type="subcellular location">
    <subcellularLocation>
        <location evidence="1 2">Nucleus</location>
    </subcellularLocation>
    <text>Localizes to nuclear foci following DNA damage.</text>
</comment>
<comment type="alternative products">
    <event type="alternative splicing"/>
    <isoform>
        <id>Q9NRY2-1</id>
        <name>1</name>
        <sequence type="displayed"/>
    </isoform>
    <isoform>
        <id>Q9NRY2-2</id>
        <name>2</name>
        <sequence type="described" ref="VSP_023423 VSP_023424"/>
    </isoform>
</comment>
<comment type="similarity">
    <text evidence="4">Belongs to the SOSS-C family.</text>
</comment>
<comment type="sequence caution" evidence="4">
    <conflict type="erroneous initiation">
        <sequence resource="EMBL-CDS" id="AAF28969"/>
    </conflict>
</comment>
<comment type="sequence caution" evidence="4">
    <conflict type="erroneous initiation">
        <sequence resource="EMBL-CDS" id="AAH13097"/>
    </conflict>
</comment>
<proteinExistence type="evidence at protein level"/>
<organism>
    <name type="scientific">Homo sapiens</name>
    <name type="common">Human</name>
    <dbReference type="NCBI Taxonomy" id="9606"/>
    <lineage>
        <taxon>Eukaryota</taxon>
        <taxon>Metazoa</taxon>
        <taxon>Chordata</taxon>
        <taxon>Craniata</taxon>
        <taxon>Vertebrata</taxon>
        <taxon>Euteleostomi</taxon>
        <taxon>Mammalia</taxon>
        <taxon>Eutheria</taxon>
        <taxon>Euarchontoglires</taxon>
        <taxon>Primates</taxon>
        <taxon>Haplorrhini</taxon>
        <taxon>Catarrhini</taxon>
        <taxon>Hominidae</taxon>
        <taxon>Homo</taxon>
    </lineage>
</organism>
<reference key="1">
    <citation type="journal article" date="2000" name="Genome Res.">
        <title>Cloning and functional analysis of cDNAs with open reading frames for 300 previously undefined genes expressed in CD34+ hematopoietic stem/progenitor cells.</title>
        <authorList>
            <person name="Zhang Q.-H."/>
            <person name="Ye M."/>
            <person name="Wu X.-Y."/>
            <person name="Ren S.-X."/>
            <person name="Zhao M."/>
            <person name="Zhao C.-J."/>
            <person name="Fu G."/>
            <person name="Shen Y."/>
            <person name="Fan H.-Y."/>
            <person name="Lu G."/>
            <person name="Zhong M."/>
            <person name="Xu X.-R."/>
            <person name="Han Z.-G."/>
            <person name="Zhang J.-W."/>
            <person name="Tao J."/>
            <person name="Huang Q.-H."/>
            <person name="Zhou J."/>
            <person name="Hu G.-X."/>
            <person name="Gu J."/>
            <person name="Chen S.-J."/>
            <person name="Chen Z."/>
        </authorList>
    </citation>
    <scope>NUCLEOTIDE SEQUENCE [LARGE SCALE MRNA] (ISOFORM 1)</scope>
    <source>
        <tissue>Umbilical cord blood</tissue>
    </source>
</reference>
<reference key="2">
    <citation type="journal article" date="2004" name="Nature">
        <title>DNA sequence and analysis of human chromosome 9.</title>
        <authorList>
            <person name="Humphray S.J."/>
            <person name="Oliver K."/>
            <person name="Hunt A.R."/>
            <person name="Plumb R.W."/>
            <person name="Loveland J.E."/>
            <person name="Howe K.L."/>
            <person name="Andrews T.D."/>
            <person name="Searle S."/>
            <person name="Hunt S.E."/>
            <person name="Scott C.E."/>
            <person name="Jones M.C."/>
            <person name="Ainscough R."/>
            <person name="Almeida J.P."/>
            <person name="Ambrose K.D."/>
            <person name="Ashwell R.I.S."/>
            <person name="Babbage A.K."/>
            <person name="Babbage S."/>
            <person name="Bagguley C.L."/>
            <person name="Bailey J."/>
            <person name="Banerjee R."/>
            <person name="Barker D.J."/>
            <person name="Barlow K.F."/>
            <person name="Bates K."/>
            <person name="Beasley H."/>
            <person name="Beasley O."/>
            <person name="Bird C.P."/>
            <person name="Bray-Allen S."/>
            <person name="Brown A.J."/>
            <person name="Brown J.Y."/>
            <person name="Burford D."/>
            <person name="Burrill W."/>
            <person name="Burton J."/>
            <person name="Carder C."/>
            <person name="Carter N.P."/>
            <person name="Chapman J.C."/>
            <person name="Chen Y."/>
            <person name="Clarke G."/>
            <person name="Clark S.Y."/>
            <person name="Clee C.M."/>
            <person name="Clegg S."/>
            <person name="Collier R.E."/>
            <person name="Corby N."/>
            <person name="Crosier M."/>
            <person name="Cummings A.T."/>
            <person name="Davies J."/>
            <person name="Dhami P."/>
            <person name="Dunn M."/>
            <person name="Dutta I."/>
            <person name="Dyer L.W."/>
            <person name="Earthrowl M.E."/>
            <person name="Faulkner L."/>
            <person name="Fleming C.J."/>
            <person name="Frankish A."/>
            <person name="Frankland J.A."/>
            <person name="French L."/>
            <person name="Fricker D.G."/>
            <person name="Garner P."/>
            <person name="Garnett J."/>
            <person name="Ghori J."/>
            <person name="Gilbert J.G.R."/>
            <person name="Glison C."/>
            <person name="Grafham D.V."/>
            <person name="Gribble S."/>
            <person name="Griffiths C."/>
            <person name="Griffiths-Jones S."/>
            <person name="Grocock R."/>
            <person name="Guy J."/>
            <person name="Hall R.E."/>
            <person name="Hammond S."/>
            <person name="Harley J.L."/>
            <person name="Harrison E.S.I."/>
            <person name="Hart E.A."/>
            <person name="Heath P.D."/>
            <person name="Henderson C.D."/>
            <person name="Hopkins B.L."/>
            <person name="Howard P.J."/>
            <person name="Howden P.J."/>
            <person name="Huckle E."/>
            <person name="Johnson C."/>
            <person name="Johnson D."/>
            <person name="Joy A.A."/>
            <person name="Kay M."/>
            <person name="Keenan S."/>
            <person name="Kershaw J.K."/>
            <person name="Kimberley A.M."/>
            <person name="King A."/>
            <person name="Knights A."/>
            <person name="Laird G.K."/>
            <person name="Langford C."/>
            <person name="Lawlor S."/>
            <person name="Leongamornlert D.A."/>
            <person name="Leversha M."/>
            <person name="Lloyd C."/>
            <person name="Lloyd D.M."/>
            <person name="Lovell J."/>
            <person name="Martin S."/>
            <person name="Mashreghi-Mohammadi M."/>
            <person name="Matthews L."/>
            <person name="McLaren S."/>
            <person name="McLay K.E."/>
            <person name="McMurray A."/>
            <person name="Milne S."/>
            <person name="Nickerson T."/>
            <person name="Nisbett J."/>
            <person name="Nordsiek G."/>
            <person name="Pearce A.V."/>
            <person name="Peck A.I."/>
            <person name="Porter K.M."/>
            <person name="Pandian R."/>
            <person name="Pelan S."/>
            <person name="Phillimore B."/>
            <person name="Povey S."/>
            <person name="Ramsey Y."/>
            <person name="Rand V."/>
            <person name="Scharfe M."/>
            <person name="Sehra H.K."/>
            <person name="Shownkeen R."/>
            <person name="Sims S.K."/>
            <person name="Skuce C.D."/>
            <person name="Smith M."/>
            <person name="Steward C.A."/>
            <person name="Swarbreck D."/>
            <person name="Sycamore N."/>
            <person name="Tester J."/>
            <person name="Thorpe A."/>
            <person name="Tracey A."/>
            <person name="Tromans A."/>
            <person name="Thomas D.W."/>
            <person name="Wall M."/>
            <person name="Wallis J.M."/>
            <person name="West A.P."/>
            <person name="Whitehead S.L."/>
            <person name="Willey D.L."/>
            <person name="Williams S.A."/>
            <person name="Wilming L."/>
            <person name="Wray P.W."/>
            <person name="Young L."/>
            <person name="Ashurst J.L."/>
            <person name="Coulson A."/>
            <person name="Blocker H."/>
            <person name="Durbin R.M."/>
            <person name="Sulston J.E."/>
            <person name="Hubbard T."/>
            <person name="Jackson M.J."/>
            <person name="Bentley D.R."/>
            <person name="Beck S."/>
            <person name="Rogers J."/>
            <person name="Dunham I."/>
        </authorList>
    </citation>
    <scope>NUCLEOTIDE SEQUENCE [LARGE SCALE GENOMIC DNA]</scope>
</reference>
<reference key="3">
    <citation type="journal article" date="2004" name="Genome Res.">
        <title>The status, quality, and expansion of the NIH full-length cDNA project: the Mammalian Gene Collection (MGC).</title>
        <authorList>
            <consortium name="The MGC Project Team"/>
        </authorList>
    </citation>
    <scope>NUCLEOTIDE SEQUENCE [LARGE SCALE MRNA] (ISOFORMS 1 AND 2)</scope>
    <source>
        <tissue>Cervix</tissue>
        <tissue>Lymph</tissue>
        <tissue>Uterus</tissue>
    </source>
</reference>
<reference key="4">
    <citation type="journal article" date="2009" name="Anal. Chem.">
        <title>Lys-N and trypsin cover complementary parts of the phosphoproteome in a refined SCX-based approach.</title>
        <authorList>
            <person name="Gauci S."/>
            <person name="Helbig A.O."/>
            <person name="Slijper M."/>
            <person name="Krijgsveld J."/>
            <person name="Heck A.J."/>
            <person name="Mohammed S."/>
        </authorList>
    </citation>
    <scope>ACETYLATION [LARGE SCALE ANALYSIS] AT ALA-2</scope>
    <scope>CLEAVAGE OF INITIATOR METHIONINE [LARGE SCALE ANALYSIS]</scope>
    <scope>IDENTIFICATION BY MASS SPECTROMETRY [LARGE SCALE ANALYSIS]</scope>
</reference>
<reference key="5">
    <citation type="journal article" date="2009" name="J. Biol. Chem.">
        <title>hSSB1 and hSSB2 form similar multiprotein complexes that participate in DNA damage response.</title>
        <authorList>
            <person name="Li Y."/>
            <person name="Bolderson E."/>
            <person name="Kumar R."/>
            <person name="Muniandy P.A."/>
            <person name="Xue Y."/>
            <person name="Richard D.J."/>
            <person name="Seidman M."/>
            <person name="Pandita T.K."/>
            <person name="Khanna K.K."/>
            <person name="Wang W."/>
        </authorList>
    </citation>
    <scope>FUNCTION</scope>
    <scope>SUBCELLULAR LOCATION</scope>
    <scope>IDENTIFICATION IN THE SOSS COMPLEX</scope>
</reference>
<reference key="6">
    <citation type="journal article" date="2009" name="Mol. Cell">
        <title>SOSS complexes participate in the maintenance of genomic stability.</title>
        <authorList>
            <person name="Huang J."/>
            <person name="Gong Z."/>
            <person name="Ghosal G."/>
            <person name="Chen J."/>
        </authorList>
    </citation>
    <scope>FUNCTION IN THE SOSS COMPLEX</scope>
    <scope>SUBCELLULAR LOCATION</scope>
    <scope>IDENTIFICATION IN THE SOSS COMPLEX</scope>
    <scope>INTERACTION WITH INTS3</scope>
</reference>
<reference key="7">
    <citation type="journal article" date="2013" name="J. Proteome Res.">
        <title>Toward a comprehensive characterization of a human cancer cell phosphoproteome.</title>
        <authorList>
            <person name="Zhou H."/>
            <person name="Di Palma S."/>
            <person name="Preisinger C."/>
            <person name="Peng M."/>
            <person name="Polat A.N."/>
            <person name="Heck A.J."/>
            <person name="Mohammed S."/>
        </authorList>
    </citation>
    <scope>PHOSPHORYLATION [LARGE SCALE ANALYSIS] AT SER-50</scope>
    <scope>IDENTIFICATION BY MASS SPECTROMETRY [LARGE SCALE ANALYSIS]</scope>
    <source>
        <tissue>Erythroleukemia</tissue>
    </source>
</reference>
<name>SOSSC_HUMAN</name>
<keyword id="KW-0002">3D-structure</keyword>
<keyword id="KW-0007">Acetylation</keyword>
<keyword id="KW-0025">Alternative splicing</keyword>
<keyword id="KW-0227">DNA damage</keyword>
<keyword id="KW-0234">DNA repair</keyword>
<keyword id="KW-0539">Nucleus</keyword>
<keyword id="KW-0597">Phosphoprotein</keyword>
<keyword id="KW-1267">Proteomics identification</keyword>
<keyword id="KW-1185">Reference proteome</keyword>
<dbReference type="EMBL" id="AF161409">
    <property type="protein sequence ID" value="AAF28969.1"/>
    <property type="status" value="ALT_INIT"/>
    <property type="molecule type" value="mRNA"/>
</dbReference>
<dbReference type="EMBL" id="AF161411">
    <property type="protein sequence ID" value="AAF28971.2"/>
    <property type="molecule type" value="mRNA"/>
</dbReference>
<dbReference type="EMBL" id="AL390067">
    <property type="status" value="NOT_ANNOTATED_CDS"/>
    <property type="molecule type" value="Genomic_DNA"/>
</dbReference>
<dbReference type="EMBL" id="BC013097">
    <property type="protein sequence ID" value="AAH13097.1"/>
    <property type="status" value="ALT_INIT"/>
    <property type="molecule type" value="mRNA"/>
</dbReference>
<dbReference type="EMBL" id="BC014881">
    <property type="protein sequence ID" value="AAH14881.1"/>
    <property type="molecule type" value="mRNA"/>
</dbReference>
<dbReference type="EMBL" id="BC065210">
    <property type="protein sequence ID" value="AAH65210.1"/>
    <property type="molecule type" value="mRNA"/>
</dbReference>
<dbReference type="CCDS" id="CCDS6785.1">
    <molecule id="Q9NRY2-1"/>
</dbReference>
<dbReference type="RefSeq" id="NP_067041.1">
    <molecule id="Q9NRY2-1"/>
    <property type="nucleotide sequence ID" value="NM_021218.3"/>
</dbReference>
<dbReference type="PDB" id="4OWT">
    <property type="method" value="X-ray"/>
    <property type="resolution" value="2.00 A"/>
    <property type="chains" value="C=1-104"/>
</dbReference>
<dbReference type="PDB" id="4OWW">
    <property type="method" value="X-ray"/>
    <property type="resolution" value="2.30 A"/>
    <property type="chains" value="C=1-104"/>
</dbReference>
<dbReference type="PDB" id="8RBZ">
    <property type="method" value="EM"/>
    <property type="resolution" value="3.70 A"/>
    <property type="chains" value="C=1-104"/>
</dbReference>
<dbReference type="PDBsum" id="4OWT"/>
<dbReference type="PDBsum" id="4OWW"/>
<dbReference type="PDBsum" id="8RBZ"/>
<dbReference type="EMDB" id="EMD-19040"/>
<dbReference type="SMR" id="Q9NRY2"/>
<dbReference type="BioGRID" id="121823">
    <property type="interactions" value="47"/>
</dbReference>
<dbReference type="ComplexPortal" id="CPX-482">
    <property type="entry name" value="SOSS1 complex"/>
</dbReference>
<dbReference type="ComplexPortal" id="CPX-614">
    <property type="entry name" value="SOSS2 complex"/>
</dbReference>
<dbReference type="CORUM" id="Q9NRY2"/>
<dbReference type="FunCoup" id="Q9NRY2">
    <property type="interactions" value="2939"/>
</dbReference>
<dbReference type="IntAct" id="Q9NRY2">
    <property type="interactions" value="35"/>
</dbReference>
<dbReference type="MINT" id="Q9NRY2"/>
<dbReference type="STRING" id="9606.ENSP00000363360"/>
<dbReference type="GlyGen" id="Q9NRY2">
    <property type="glycosylation" value="1 site, 1 O-linked glycan (1 site)"/>
</dbReference>
<dbReference type="iPTMnet" id="Q9NRY2"/>
<dbReference type="PhosphoSitePlus" id="Q9NRY2"/>
<dbReference type="BioMuta" id="INIP"/>
<dbReference type="jPOST" id="Q9NRY2"/>
<dbReference type="MassIVE" id="Q9NRY2"/>
<dbReference type="PaxDb" id="9606-ENSP00000363360"/>
<dbReference type="PeptideAtlas" id="Q9NRY2"/>
<dbReference type="ProteomicsDB" id="82439">
    <molecule id="Q9NRY2-1"/>
</dbReference>
<dbReference type="ProteomicsDB" id="82440">
    <molecule id="Q9NRY2-2"/>
</dbReference>
<dbReference type="Pumba" id="Q9NRY2"/>
<dbReference type="Antibodypedia" id="15240">
    <property type="antibodies" value="39 antibodies from 9 providers"/>
</dbReference>
<dbReference type="DNASU" id="58493"/>
<dbReference type="Ensembl" id="ENST00000374242.9">
    <molecule id="Q9NRY2-1"/>
    <property type="protein sequence ID" value="ENSP00000363360.3"/>
    <property type="gene ID" value="ENSG00000148153.14"/>
</dbReference>
<dbReference type="GeneID" id="58493"/>
<dbReference type="KEGG" id="hsa:58493"/>
<dbReference type="MANE-Select" id="ENST00000374242.9">
    <property type="protein sequence ID" value="ENSP00000363360.3"/>
    <property type="RefSeq nucleotide sequence ID" value="NM_021218.3"/>
    <property type="RefSeq protein sequence ID" value="NP_067041.1"/>
</dbReference>
<dbReference type="UCSC" id="uc004bgg.4">
    <molecule id="Q9NRY2-1"/>
    <property type="organism name" value="human"/>
</dbReference>
<dbReference type="AGR" id="HGNC:24994"/>
<dbReference type="CTD" id="58493"/>
<dbReference type="DisGeNET" id="58493"/>
<dbReference type="GeneCards" id="INIP"/>
<dbReference type="HGNC" id="HGNC:24994">
    <property type="gene designation" value="INIP"/>
</dbReference>
<dbReference type="HPA" id="ENSG00000148153">
    <property type="expression patterns" value="Low tissue specificity"/>
</dbReference>
<dbReference type="MIM" id="613273">
    <property type="type" value="gene"/>
</dbReference>
<dbReference type="neXtProt" id="NX_Q9NRY2"/>
<dbReference type="OpenTargets" id="ENSG00000148153"/>
<dbReference type="PharmGKB" id="PA134992982"/>
<dbReference type="VEuPathDB" id="HostDB:ENSG00000148153"/>
<dbReference type="eggNOG" id="ENOG502S23S">
    <property type="taxonomic scope" value="Eukaryota"/>
</dbReference>
<dbReference type="GeneTree" id="ENSGT00390000006366"/>
<dbReference type="InParanoid" id="Q9NRY2"/>
<dbReference type="OMA" id="QPLFQTY"/>
<dbReference type="OrthoDB" id="10040290at2759"/>
<dbReference type="PAN-GO" id="Q9NRY2">
    <property type="GO annotations" value="3 GO annotations based on evolutionary models"/>
</dbReference>
<dbReference type="PhylomeDB" id="Q9NRY2"/>
<dbReference type="TreeFam" id="TF328613"/>
<dbReference type="PathwayCommons" id="Q9NRY2"/>
<dbReference type="SignaLink" id="Q9NRY2"/>
<dbReference type="BioGRID-ORCS" id="58493">
    <property type="hits" value="19 hits in 1135 CRISPR screens"/>
</dbReference>
<dbReference type="ChiTaRS" id="INIP">
    <property type="organism name" value="human"/>
</dbReference>
<dbReference type="EvolutionaryTrace" id="Q9NRY2"/>
<dbReference type="GenomeRNAi" id="58493"/>
<dbReference type="Pharos" id="Q9NRY2">
    <property type="development level" value="Tbio"/>
</dbReference>
<dbReference type="PRO" id="PR:Q9NRY2"/>
<dbReference type="Proteomes" id="UP000005640">
    <property type="component" value="Chromosome 9"/>
</dbReference>
<dbReference type="RNAct" id="Q9NRY2">
    <property type="molecule type" value="protein"/>
</dbReference>
<dbReference type="Bgee" id="ENSG00000148153">
    <property type="expression patterns" value="Expressed in ileal mucosa and 194 other cell types or tissues"/>
</dbReference>
<dbReference type="ExpressionAtlas" id="Q9NRY2">
    <property type="expression patterns" value="baseline and differential"/>
</dbReference>
<dbReference type="GO" id="GO:0005654">
    <property type="term" value="C:nucleoplasm"/>
    <property type="evidence" value="ECO:0000314"/>
    <property type="project" value="HPA"/>
</dbReference>
<dbReference type="GO" id="GO:0005634">
    <property type="term" value="C:nucleus"/>
    <property type="evidence" value="ECO:0000314"/>
    <property type="project" value="UniProtKB"/>
</dbReference>
<dbReference type="GO" id="GO:0035861">
    <property type="term" value="C:site of double-strand break"/>
    <property type="evidence" value="ECO:0000314"/>
    <property type="project" value="UniProtKB"/>
</dbReference>
<dbReference type="GO" id="GO:0070876">
    <property type="term" value="C:SOSS complex"/>
    <property type="evidence" value="ECO:0000314"/>
    <property type="project" value="UniProtKB"/>
</dbReference>
<dbReference type="GO" id="GO:0006974">
    <property type="term" value="P:DNA damage response"/>
    <property type="evidence" value="ECO:0000315"/>
    <property type="project" value="UniProtKB"/>
</dbReference>
<dbReference type="GO" id="GO:0006281">
    <property type="term" value="P:DNA repair"/>
    <property type="evidence" value="ECO:0000315"/>
    <property type="project" value="UniProtKB"/>
</dbReference>
<dbReference type="GO" id="GO:0000724">
    <property type="term" value="P:double-strand break repair via homologous recombination"/>
    <property type="evidence" value="ECO:0000314"/>
    <property type="project" value="ComplexPortal"/>
</dbReference>
<dbReference type="GO" id="GO:0044818">
    <property type="term" value="P:mitotic G2/M transition checkpoint"/>
    <property type="evidence" value="ECO:0000314"/>
    <property type="project" value="ComplexPortal"/>
</dbReference>
<dbReference type="GO" id="GO:0010212">
    <property type="term" value="P:response to ionizing radiation"/>
    <property type="evidence" value="ECO:0000315"/>
    <property type="project" value="UniProtKB"/>
</dbReference>
<dbReference type="DisProt" id="DP01943"/>
<dbReference type="InterPro" id="IPR031821">
    <property type="entry name" value="SOSSC"/>
</dbReference>
<dbReference type="PANTHER" id="PTHR31526">
    <property type="entry name" value="SOSS COMPLEX SUBUNIT C"/>
    <property type="match status" value="1"/>
</dbReference>
<dbReference type="PANTHER" id="PTHR31526:SF2">
    <property type="entry name" value="SOSS COMPLEX SUBUNIT C"/>
    <property type="match status" value="1"/>
</dbReference>
<dbReference type="Pfam" id="PF15925">
    <property type="entry name" value="SOSSC"/>
    <property type="match status" value="1"/>
</dbReference>
<evidence type="ECO:0000269" key="1">
    <source>
    </source>
</evidence>
<evidence type="ECO:0000269" key="2">
    <source>
    </source>
</evidence>
<evidence type="ECO:0000303" key="3">
    <source>
    </source>
</evidence>
<evidence type="ECO:0000305" key="4"/>
<evidence type="ECO:0007744" key="5">
    <source>
    </source>
</evidence>
<evidence type="ECO:0007744" key="6">
    <source>
    </source>
</evidence>
<evidence type="ECO:0007829" key="7">
    <source>
        <dbReference type="PDB" id="4OWT"/>
    </source>
</evidence>
<feature type="initiator methionine" description="Removed" evidence="5">
    <location>
        <position position="1"/>
    </location>
</feature>
<feature type="chain" id="PRO_0000279419" description="SOSS complex subunit C">
    <location>
        <begin position="2"/>
        <end position="104"/>
    </location>
</feature>
<feature type="modified residue" description="N-acetylalanine" evidence="5">
    <location>
        <position position="2"/>
    </location>
</feature>
<feature type="modified residue" description="Phosphoserine" evidence="6">
    <location>
        <position position="50"/>
    </location>
</feature>
<feature type="splice variant" id="VSP_023423" description="In isoform 2." evidence="3">
    <original>SI</original>
    <variation>RY</variation>
    <location>
        <begin position="43"/>
        <end position="44"/>
    </location>
</feature>
<feature type="splice variant" id="VSP_023424" description="In isoform 2." evidence="3">
    <location>
        <begin position="45"/>
        <end position="104"/>
    </location>
</feature>
<feature type="helix" evidence="7">
    <location>
        <begin position="65"/>
        <end position="78"/>
    </location>
</feature>
<feature type="strand" evidence="7">
    <location>
        <begin position="83"/>
        <end position="85"/>
    </location>
</feature>
<feature type="strand" evidence="7">
    <location>
        <begin position="89"/>
        <end position="91"/>
    </location>
</feature>
<feature type="strand" evidence="7">
    <location>
        <begin position="93"/>
        <end position="96"/>
    </location>
</feature>
<sequence>MAANSSGQGFQNKNRVAILAELDKEKRKLLMQNQSSTNHPGASIALSRPSLNKDFRDHAEQQHIAAQQKAALQHAHAHSSGYFITQDSAFGNLILPVLPRLDPE</sequence>
<protein>
    <recommendedName>
        <fullName>SOSS complex subunit C</fullName>
    </recommendedName>
    <alternativeName>
        <fullName>INTS3- and NABP-interacting protein</fullName>
    </alternativeName>
    <alternativeName>
        <fullName>Sensor of single-strand DNA complex subunit C</fullName>
    </alternativeName>
    <alternativeName>
        <fullName>Sensor of ssDNA subunit C</fullName>
        <shortName>SOSS-C</shortName>
    </alternativeName>
    <alternativeName>
        <fullName>Single-stranded DNA-binding protein-interacting protein 1</fullName>
        <shortName>SSB-interacting protein 1</shortName>
        <shortName>hSSBIP1</shortName>
    </alternativeName>
</protein>
<accession>Q9NRY2</accession>
<accession>Q5VWJ7</accession>
<accession>Q96E04</accession>
<accession>Q9P090</accession>
<gene>
    <name type="primary">INIP</name>
    <name type="synonym">C9orf80</name>
    <name type="synonym">SSBIP1</name>
    <name type="ORF">HSPC043</name>
    <name type="ORF">HSPC291</name>
</gene>